<sequence length="2387" mass="264828">MLPPKSLSATKPKKWAPNLYELDSDLSEPDAVPGEGATDSEFFHQRFRNFLYVEFIGPRKTLLKLRNLCLDWLQPEIRTKEEIIEVLVLEQYLSILPERIKPWVYARKPETCEKLVALLEDYEAMYEPEDDNSSDTHSEGGMSRRAAESPPPRPALPCCSERERRRGRSRDMESRDRWPSVRSPRSRFHQRDLALPLAERAKEREHRRRDSLLDLDARSEEAVLYQDMVALTEDRKPQNPIQDNMENYRKLLSLGVQLAEDDGHSHMTQGHSARSKRSAYPSTSRGLKTAPETKKSAHRRGICEAESSHGVIMEKFIKDVARSSRSGRARESSERPHRLSRRAGGDWKEASFSRREAGASERGPEGGAFGGGGFSCGSDLVSKKRALERKRRYHFDAEGQGPVHDPRGGARKRPFECGGEARRAAKAAGASSLSAPPAAPSQPLDFGAMPYVCDECGRSFAVISEFVEHQIVHTRESLYEYGESFIHSAAVSEAQSRPEGARRSEGAQAAGLAEHRGGQAQEHLRGSGDEEQDEPFLPSPTFSELQKMYGKDKFYECKVCKETFLHSSALIEHQKIHSHEDREKERSTGAVRRTPMLGELQRACGKEKRYECKVCGETFHHSAALREHQKTHGRGSPSEGRARAFEETFIPGQSLKRRQKTYSKEKLYDFREGGDAFGRSSDFMEHQKIHSRKSYFDSRGYEKPLLHSMSMPGSQKSHTITRPPEDEDEEKAFTASSSPEDGQEARGYERSAYERAILHSLAAFRPPRGLREDGEPSTYLSGLRDPPQKTPAWESPYAGGRHSFFRSSVFYRASRPAPLDHLAGEGPSGWQRDGEASGPSSDGRQHQKARAKKKNIERKNYDASMMHSLHFGESQTFRPRERFYECLECGEFFVRSSELAEHQKIHNRKKLSGSKNYLRSVLRSLSSTDPQTSYQGQSVQMSYPQEAAQTSYAELAAQTSYAEEPAQTSYAVEPAQTSYAEEPAQTSYTEAPAEASYTEEPAQTSCIEEPAQTSYTNPAAETSYAEEPAQTSYTEAPAEASYTEEPAQTSCIEEPAQTSYTNPAAETSYTEEPAQTSYTEAPAEASGIEEPAQTNYTEESAEVSYTEEPSQTSCIEEPAQTSYTDPAAETSYTEEPAQTSYTQEPAQTSCTEEPAQTSCTEEPAQTSYTQEPAQTSYTKEPAEASYTEEPAQTSCIEEPAQTNYTKESAKASYTEEPAQTSYTDPAAETSYTEEPAQTNYTVESAEASYTEEPSQTSCIEEPAQTSYTDSAADTSCTEEPAQTSCTEEPAQTSYTQEPAQTSCTEEPAQTSCTEEPAQTSYTQEPAQTSCTEEPAQTSYTQEPAQTSCTEEPAQTSYTEEPAQTSYTEEPAQTSYTQEPAQTSCTEEPAQTSYTEEPAQTSYTEEPAQTSYTQEPAQTSYTEEPAQTSYTEEPAQTSYAQEPAQTSYAEEPAQTSYAEEPAQTSYAEEPAQTSYTQEPAQTNYTEEPAEASYTEEPAQTSYAEEPAQTSYPEEPAQTSYAEEPAQTSYAEEPAQTSYPEEPAQTSYTEEPAQTSYAKEPAQTSYPEEPAQTSYAEEPAQTSYAEEPAQTSYAEEPAQTSYSEEPAQTRYTGNELRSDMRKNQLRPDMPRNQLRPVMPRNQLRPDMPRNQPRPVILRNQLRPDMPRNQPRPVILRNQLRPDMLGNQLRPDMPGNQLRPDMLREPPAETSYAELVAQISYAELVTPTSYAELAAETGYFEPPAQTSYTEPAETNYADPAAQVSFDEPPAEASYADLAAEISYAELAAETSYADLAAQISYDEPPAETSYAELAAQISYSEPADQTSYAELAAQTSYSEPLAQTSYAELTSETSYCEQPVLNECKECGECFATVEDLGRHQKIYAREKFHDGKLFGEPVMQDLGLDGSPEEELEEQEEPEEPEDSIYGCKDCGLGFADRADLRDHQKVHGREYLVDSREYTHPAVHMPPVSEYQKDCLGEQLYECPACGESFVHSSFLFEHQKVHEQDQFYGHRRYEPFMQPLIVSPRRPQAPQKSAPAGVGPQCQVCGQDFIHASVLSEHARGHAGEGLPDQGQGGAGAAGPGPAPTEPQQDPGEEQRYECETCGESFPSQADLQEHMRVHEKGEPYDYGAAFVHTSFLTEPPKRDWPFYECKDCGKSFIHSTILTKHQKLHLQEEGAAAAAAATAQEAEANVLVPREVLRIQGSNVEAAEPEVEAAEPEVEAAEPEVEAAEPLGEAEGPEWEAAEPSGEAEQPHAEAEQPDMDADEPDGAGIEDPEERAEEPEGDDDEPDGAGIEDPEEEGEEQEIQVEEPYYDCGECGETFPSGAAYAEHLTAHASLVILEPAGLYGEGAGGPEGGRPDDELFKCDVCGQLFSDRLSLARHQNTHTG</sequence>
<proteinExistence type="evidence at transcript level"/>
<evidence type="ECO:0000250" key="1"/>
<evidence type="ECO:0000255" key="2">
    <source>
        <dbReference type="PROSITE-ProRule" id="PRU00042"/>
    </source>
</evidence>
<evidence type="ECO:0000255" key="3">
    <source>
        <dbReference type="PROSITE-ProRule" id="PRU00187"/>
    </source>
</evidence>
<evidence type="ECO:0000256" key="4">
    <source>
        <dbReference type="SAM" id="MobiDB-lite"/>
    </source>
</evidence>
<evidence type="ECO:0000269" key="5">
    <source>
    </source>
</evidence>
<evidence type="ECO:0000305" key="6"/>
<protein>
    <recommendedName>
        <fullName>Paternally-expressed gene 3 protein</fullName>
    </recommendedName>
</protein>
<organism>
    <name type="scientific">Bos taurus</name>
    <name type="common">Bovine</name>
    <dbReference type="NCBI Taxonomy" id="9913"/>
    <lineage>
        <taxon>Eukaryota</taxon>
        <taxon>Metazoa</taxon>
        <taxon>Chordata</taxon>
        <taxon>Craniata</taxon>
        <taxon>Vertebrata</taxon>
        <taxon>Euteleostomi</taxon>
        <taxon>Mammalia</taxon>
        <taxon>Eutheria</taxon>
        <taxon>Laurasiatheria</taxon>
        <taxon>Artiodactyla</taxon>
        <taxon>Ruminantia</taxon>
        <taxon>Pecora</taxon>
        <taxon>Bovidae</taxon>
        <taxon>Bovinae</taxon>
        <taxon>Bos</taxon>
    </lineage>
</organism>
<feature type="chain" id="PRO_0000249227" description="Paternally-expressed gene 3 protein">
    <location>
        <begin position="1"/>
        <end position="2387"/>
    </location>
</feature>
<feature type="domain" description="SCAN box" evidence="3">
    <location>
        <begin position="44"/>
        <end position="126"/>
    </location>
</feature>
<feature type="repeat" description="1-1">
    <location>
        <begin position="965"/>
        <end position="973"/>
    </location>
</feature>
<feature type="repeat" description="1-2">
    <location>
        <begin position="974"/>
        <end position="982"/>
    </location>
</feature>
<feature type="repeat" description="3-1">
    <location>
        <begin position="983"/>
        <end position="991"/>
    </location>
</feature>
<feature type="repeat" description="2-1">
    <location>
        <begin position="1001"/>
        <end position="1009"/>
    </location>
</feature>
<feature type="repeat" description="4-1">
    <location>
        <begin position="1010"/>
        <end position="1018"/>
    </location>
</feature>
<feature type="repeat" description="3-2">
    <location>
        <begin position="1028"/>
        <end position="1036"/>
    </location>
</feature>
<feature type="repeat" description="2-2">
    <location>
        <begin position="1046"/>
        <end position="1054"/>
    </location>
</feature>
<feature type="repeat" description="4-2">
    <location>
        <begin position="1055"/>
        <end position="1063"/>
    </location>
</feature>
<feature type="repeat" description="3-3">
    <location>
        <begin position="1073"/>
        <end position="1081"/>
    </location>
</feature>
<feature type="repeat" description="1-3">
    <location>
        <begin position="1091"/>
        <end position="1099"/>
    </location>
</feature>
<feature type="repeat" description="2-3">
    <location>
        <begin position="1109"/>
        <end position="1117"/>
    </location>
</feature>
<feature type="repeat" description="4-3">
    <location>
        <begin position="1118"/>
        <end position="1126"/>
    </location>
</feature>
<feature type="repeat" description="1-4">
    <location>
        <begin position="1136"/>
        <end position="1144"/>
    </location>
</feature>
<feature type="repeat" description="2-4">
    <location>
        <begin position="1145"/>
        <end position="1153"/>
    </location>
</feature>
<feature type="repeat" description="2-5">
    <location>
        <begin position="1154"/>
        <end position="1162"/>
    </location>
</feature>
<feature type="repeat" description="1-5">
    <location>
        <begin position="1163"/>
        <end position="1171"/>
    </location>
</feature>
<feature type="repeat" description="1-6">
    <location>
        <begin position="1172"/>
        <end position="1180"/>
    </location>
</feature>
<feature type="repeat" description="2-6">
    <location>
        <begin position="1190"/>
        <end position="1198"/>
    </location>
</feature>
<feature type="repeat" description="1-7">
    <location>
        <begin position="1199"/>
        <end position="1207"/>
    </location>
</feature>
<feature type="repeat" description="4-4">
    <location>
        <begin position="1217"/>
        <end position="1225"/>
    </location>
</feature>
<feature type="repeat" description="1-8">
    <location>
        <begin position="1235"/>
        <end position="1243"/>
    </location>
</feature>
<feature type="repeat" description="2-7">
    <location>
        <begin position="1253"/>
        <end position="1261"/>
    </location>
</feature>
<feature type="repeat" description="2-8">
    <location>
        <begin position="1280"/>
        <end position="1288"/>
    </location>
</feature>
<feature type="repeat" description="1-9">
    <location>
        <begin position="1289"/>
        <end position="1297"/>
    </location>
</feature>
<feature type="repeat" description="2-9">
    <location>
        <begin position="1298"/>
        <end position="1306"/>
    </location>
</feature>
<feature type="repeat" description="2-10">
    <location>
        <begin position="1307"/>
        <end position="1315"/>
    </location>
</feature>
<feature type="repeat" description="1-10">
    <location>
        <begin position="1316"/>
        <end position="1324"/>
    </location>
</feature>
<feature type="repeat" description="2-11">
    <location>
        <begin position="1325"/>
        <end position="1333"/>
    </location>
</feature>
<feature type="repeat" description="1-11">
    <location>
        <begin position="1334"/>
        <end position="1342"/>
    </location>
</feature>
<feature type="repeat" description="2-12">
    <location>
        <begin position="1343"/>
        <end position="1351"/>
    </location>
</feature>
<feature type="repeat" description="1-12">
    <location>
        <begin position="1352"/>
        <end position="1360"/>
    </location>
</feature>
<feature type="repeat" description="1-13">
    <location>
        <begin position="1361"/>
        <end position="1369"/>
    </location>
</feature>
<feature type="repeat" description="1-14">
    <location>
        <begin position="1370"/>
        <end position="1378"/>
    </location>
</feature>
<feature type="repeat" description="2-13">
    <location>
        <begin position="1379"/>
        <end position="1387"/>
    </location>
</feature>
<feature type="repeat" description="1-15">
    <location>
        <begin position="1388"/>
        <end position="1396"/>
    </location>
</feature>
<feature type="repeat" description="1-16">
    <location>
        <begin position="1397"/>
        <end position="1405"/>
    </location>
</feature>
<feature type="repeat" description="1-17">
    <location>
        <begin position="1406"/>
        <end position="1414"/>
    </location>
</feature>
<feature type="repeat" description="1-18">
    <location>
        <begin position="1415"/>
        <end position="1423"/>
    </location>
</feature>
<feature type="repeat" description="1-19">
    <location>
        <begin position="1424"/>
        <end position="1432"/>
    </location>
</feature>
<feature type="repeat" description="1-20">
    <location>
        <begin position="1433"/>
        <end position="1441"/>
    </location>
</feature>
<feature type="repeat" description="1-21">
    <location>
        <begin position="1442"/>
        <end position="1450"/>
    </location>
</feature>
<feature type="repeat" description="1-22">
    <location>
        <begin position="1451"/>
        <end position="1459"/>
    </location>
</feature>
<feature type="repeat" description="1-23">
    <location>
        <begin position="1460"/>
        <end position="1468"/>
    </location>
</feature>
<feature type="repeat" description="1-24">
    <location>
        <begin position="1469"/>
        <end position="1477"/>
    </location>
</feature>
<feature type="repeat" description="1-25">
    <location>
        <begin position="1478"/>
        <end position="1486"/>
    </location>
</feature>
<feature type="repeat" description="1-26">
    <location>
        <begin position="1496"/>
        <end position="1504"/>
    </location>
</feature>
<feature type="repeat" description="1-27">
    <location>
        <begin position="1505"/>
        <end position="1513"/>
    </location>
</feature>
<feature type="repeat" description="1-28">
    <location>
        <begin position="1514"/>
        <end position="1522"/>
    </location>
</feature>
<feature type="repeat" description="1-29">
    <location>
        <begin position="1523"/>
        <end position="1531"/>
    </location>
</feature>
<feature type="repeat" description="1-30">
    <location>
        <begin position="1532"/>
        <end position="1540"/>
    </location>
</feature>
<feature type="repeat" description="1-31">
    <location>
        <begin position="1541"/>
        <end position="1549"/>
    </location>
</feature>
<feature type="repeat" description="1-32">
    <location>
        <begin position="1550"/>
        <end position="1558"/>
    </location>
</feature>
<feature type="repeat" description="1-33">
    <location>
        <begin position="1559"/>
        <end position="1567"/>
    </location>
</feature>
<feature type="repeat" description="1-34">
    <location>
        <begin position="1568"/>
        <end position="1576"/>
    </location>
</feature>
<feature type="repeat" description="1-35">
    <location>
        <begin position="1577"/>
        <end position="1585"/>
    </location>
</feature>
<feature type="repeat" description="1-36">
    <location>
        <begin position="1586"/>
        <end position="1594"/>
    </location>
</feature>
<feature type="repeat" description="1-37">
    <location>
        <begin position="1595"/>
        <end position="1603"/>
    </location>
</feature>
<feature type="zinc finger region" description="C2H2-type 1" evidence="2">
    <location>
        <begin position="451"/>
        <end position="473"/>
    </location>
</feature>
<feature type="zinc finger region" description="C2H2-type 2" evidence="2">
    <location>
        <begin position="555"/>
        <end position="577"/>
    </location>
</feature>
<feature type="zinc finger region" description="C2H2-type 3" evidence="2">
    <location>
        <begin position="610"/>
        <end position="632"/>
    </location>
</feature>
<feature type="zinc finger region" description="C2H2-type 4; degenerate" evidence="2">
    <location>
        <begin position="668"/>
        <end position="690"/>
    </location>
</feature>
<feature type="zinc finger region" description="C2H2-type 5" evidence="2">
    <location>
        <begin position="884"/>
        <end position="906"/>
    </location>
</feature>
<feature type="zinc finger region" description="C2H2-type 6; degenerate" evidence="2">
    <location>
        <begin position="1859"/>
        <end position="1881"/>
    </location>
</feature>
<feature type="zinc finger region" description="C2H2-type 7" evidence="2">
    <location>
        <begin position="1924"/>
        <end position="1946"/>
    </location>
</feature>
<feature type="zinc finger region" description="C2H2-type 8" evidence="2">
    <location>
        <begin position="1980"/>
        <end position="2002"/>
    </location>
</feature>
<feature type="zinc finger region" description="C2H2-type 9" evidence="2">
    <location>
        <begin position="2040"/>
        <end position="2062"/>
    </location>
</feature>
<feature type="zinc finger region" description="C2H2-type 10" evidence="2">
    <location>
        <begin position="2097"/>
        <end position="2119"/>
    </location>
</feature>
<feature type="zinc finger region" description="C2H2-type 11" evidence="2">
    <location>
        <begin position="2148"/>
        <end position="2170"/>
    </location>
</feature>
<feature type="zinc finger region" description="C2H2-type 12" evidence="2">
    <location>
        <begin position="2312"/>
        <end position="2334"/>
    </location>
</feature>
<feature type="zinc finger region" description="C2H2-type 13" evidence="2">
    <location>
        <begin position="2363"/>
        <end position="2385"/>
    </location>
</feature>
<feature type="region of interest" description="Disordered" evidence="4">
    <location>
        <begin position="127"/>
        <end position="194"/>
    </location>
</feature>
<feature type="region of interest" description="Disordered" evidence="4">
    <location>
        <begin position="262"/>
        <end position="305"/>
    </location>
</feature>
<feature type="region of interest" description="Disordered" evidence="4">
    <location>
        <begin position="321"/>
        <end position="371"/>
    </location>
</feature>
<feature type="region of interest" description="Disordered" evidence="4">
    <location>
        <begin position="392"/>
        <end position="423"/>
    </location>
</feature>
<feature type="region of interest" description="Disordered" evidence="4">
    <location>
        <begin position="492"/>
        <end position="542"/>
    </location>
</feature>
<feature type="region of interest" description="Disordered" evidence="4">
    <location>
        <begin position="704"/>
        <end position="747"/>
    </location>
</feature>
<feature type="region of interest" description="Disordered" evidence="4">
    <location>
        <begin position="764"/>
        <end position="797"/>
    </location>
</feature>
<feature type="region of interest" description="Disordered" evidence="4">
    <location>
        <begin position="820"/>
        <end position="858"/>
    </location>
</feature>
<feature type="region of interest" description="Disordered" evidence="4">
    <location>
        <begin position="965"/>
        <end position="1651"/>
    </location>
</feature>
<feature type="region of interest" description="37 X 9 AA repeat of P-A-Q-T-X-Y-X-X-E">
    <location>
        <begin position="965"/>
        <end position="1603"/>
    </location>
</feature>
<feature type="region of interest" description="Disordered" evidence="4">
    <location>
        <begin position="1900"/>
        <end position="1921"/>
    </location>
</feature>
<feature type="region of interest" description="Disordered" evidence="4">
    <location>
        <begin position="2059"/>
        <end position="2102"/>
    </location>
</feature>
<feature type="region of interest" description="Disordered" evidence="4">
    <location>
        <begin position="2204"/>
        <end position="2322"/>
    </location>
</feature>
<feature type="compositionally biased region" description="Basic and acidic residues" evidence="4">
    <location>
        <begin position="160"/>
        <end position="179"/>
    </location>
</feature>
<feature type="compositionally biased region" description="Basic and acidic residues" evidence="4">
    <location>
        <begin position="291"/>
        <end position="305"/>
    </location>
</feature>
<feature type="compositionally biased region" description="Basic and acidic residues" evidence="4">
    <location>
        <begin position="321"/>
        <end position="364"/>
    </location>
</feature>
<feature type="compositionally biased region" description="Basic and acidic residues" evidence="4">
    <location>
        <begin position="404"/>
        <end position="423"/>
    </location>
</feature>
<feature type="compositionally biased region" description="Basic and acidic residues" evidence="4">
    <location>
        <begin position="513"/>
        <end position="528"/>
    </location>
</feature>
<feature type="compositionally biased region" description="Polar residues" evidence="4">
    <location>
        <begin position="711"/>
        <end position="720"/>
    </location>
</feature>
<feature type="compositionally biased region" description="Basic residues" evidence="4">
    <location>
        <begin position="846"/>
        <end position="856"/>
    </location>
</feature>
<feature type="compositionally biased region" description="Polar residues" evidence="4">
    <location>
        <begin position="965"/>
        <end position="989"/>
    </location>
</feature>
<feature type="compositionally biased region" description="Polar residues" evidence="4">
    <location>
        <begin position="1001"/>
        <end position="1020"/>
    </location>
</feature>
<feature type="compositionally biased region" description="Polar residues" evidence="4">
    <location>
        <begin position="1046"/>
        <end position="1079"/>
    </location>
</feature>
<feature type="compositionally biased region" description="Polar residues" evidence="4">
    <location>
        <begin position="1107"/>
        <end position="1178"/>
    </location>
</feature>
<feature type="compositionally biased region" description="Polar residues" evidence="4">
    <location>
        <begin position="1190"/>
        <end position="1206"/>
    </location>
</feature>
<feature type="compositionally biased region" description="Polar residues" evidence="4">
    <location>
        <begin position="1217"/>
        <end position="1242"/>
    </location>
</feature>
<feature type="compositionally biased region" description="Polar residues" evidence="4">
    <location>
        <begin position="1251"/>
        <end position="1484"/>
    </location>
</feature>
<feature type="compositionally biased region" description="Polar residues" evidence="4">
    <location>
        <begin position="1496"/>
        <end position="1601"/>
    </location>
</feature>
<feature type="compositionally biased region" description="Acidic residues" evidence="4">
    <location>
        <begin position="1905"/>
        <end position="1921"/>
    </location>
</feature>
<feature type="compositionally biased region" description="Acidic residues" evidence="4">
    <location>
        <begin position="2208"/>
        <end position="2228"/>
    </location>
</feature>
<feature type="compositionally biased region" description="Acidic residues" evidence="4">
    <location>
        <begin position="2257"/>
        <end position="2311"/>
    </location>
</feature>
<name>PEG3_BOVIN</name>
<keyword id="KW-0025">Alternative splicing</keyword>
<keyword id="KW-0053">Apoptosis</keyword>
<keyword id="KW-0963">Cytoplasm</keyword>
<keyword id="KW-0479">Metal-binding</keyword>
<keyword id="KW-0539">Nucleus</keyword>
<keyword id="KW-1185">Reference proteome</keyword>
<keyword id="KW-0677">Repeat</keyword>
<keyword id="KW-0862">Zinc</keyword>
<keyword id="KW-0863">Zinc-finger</keyword>
<gene>
    <name type="primary">PEG3</name>
</gene>
<reference key="1">
    <citation type="journal article" date="2004" name="Genomics">
        <title>Lineage-specific imprinting and evolution of the zinc-finger gene ZIM2.</title>
        <authorList>
            <person name="Kim J."/>
            <person name="Bergmann A."/>
            <person name="Lucas S."/>
            <person name="Stone R."/>
            <person name="Stubbs L."/>
        </authorList>
    </citation>
    <scope>NUCLEOTIDE SEQUENCE [MRNA]</scope>
    <scope>TISSUE SPECIFICITY</scope>
    <scope>ALTERNATIVE SPLICING</scope>
</reference>
<accession>Q6H236</accession>
<dbReference type="EMBL" id="AY427787">
    <property type="protein sequence ID" value="AAR97556.1"/>
    <property type="molecule type" value="mRNA"/>
</dbReference>
<dbReference type="FunCoup" id="Q6H236">
    <property type="interactions" value="191"/>
</dbReference>
<dbReference type="STRING" id="9913.ENSBTAP00000058056"/>
<dbReference type="PaxDb" id="9913-ENSBTAP00000031689"/>
<dbReference type="eggNOG" id="KOG1721">
    <property type="taxonomic scope" value="Eukaryota"/>
</dbReference>
<dbReference type="InParanoid" id="Q6H236"/>
<dbReference type="Proteomes" id="UP000009136">
    <property type="component" value="Unplaced"/>
</dbReference>
<dbReference type="GO" id="GO:0005737">
    <property type="term" value="C:cytoplasm"/>
    <property type="evidence" value="ECO:0007669"/>
    <property type="project" value="UniProtKB-SubCell"/>
</dbReference>
<dbReference type="GO" id="GO:0005634">
    <property type="term" value="C:nucleus"/>
    <property type="evidence" value="ECO:0007669"/>
    <property type="project" value="UniProtKB-SubCell"/>
</dbReference>
<dbReference type="GO" id="GO:0000981">
    <property type="term" value="F:DNA-binding transcription factor activity, RNA polymerase II-specific"/>
    <property type="evidence" value="ECO:0000318"/>
    <property type="project" value="GO_Central"/>
</dbReference>
<dbReference type="GO" id="GO:0000978">
    <property type="term" value="F:RNA polymerase II cis-regulatory region sequence-specific DNA binding"/>
    <property type="evidence" value="ECO:0000318"/>
    <property type="project" value="GO_Central"/>
</dbReference>
<dbReference type="GO" id="GO:0008270">
    <property type="term" value="F:zinc ion binding"/>
    <property type="evidence" value="ECO:0007669"/>
    <property type="project" value="UniProtKB-KW"/>
</dbReference>
<dbReference type="GO" id="GO:0006915">
    <property type="term" value="P:apoptotic process"/>
    <property type="evidence" value="ECO:0007669"/>
    <property type="project" value="UniProtKB-KW"/>
</dbReference>
<dbReference type="GO" id="GO:0006357">
    <property type="term" value="P:regulation of transcription by RNA polymerase II"/>
    <property type="evidence" value="ECO:0000318"/>
    <property type="project" value="GO_Central"/>
</dbReference>
<dbReference type="CDD" id="cd07936">
    <property type="entry name" value="SCAN"/>
    <property type="match status" value="1"/>
</dbReference>
<dbReference type="FunFam" id="3.30.160.60:FF:002668">
    <property type="entry name" value="Paternally expressed 3"/>
    <property type="match status" value="1"/>
</dbReference>
<dbReference type="FunFam" id="3.30.160.60:FF:001757">
    <property type="entry name" value="paternally-expressed gene 3 protein isoform X1"/>
    <property type="match status" value="1"/>
</dbReference>
<dbReference type="FunFam" id="3.30.160.60:FF:002097">
    <property type="entry name" value="paternally-expressed gene 3 protein isoform X1"/>
    <property type="match status" value="1"/>
</dbReference>
<dbReference type="FunFam" id="3.30.160.60:FF:000661">
    <property type="entry name" value="paternally-expressed gene 3 protein-like"/>
    <property type="match status" value="1"/>
</dbReference>
<dbReference type="FunFam" id="3.30.160.60:FF:000100">
    <property type="entry name" value="Zinc finger 45-like"/>
    <property type="match status" value="1"/>
</dbReference>
<dbReference type="FunFam" id="3.30.160.60:FF:000870">
    <property type="entry name" value="zinc finger protein 197 isoform X1"/>
    <property type="match status" value="1"/>
</dbReference>
<dbReference type="FunFam" id="1.10.4020.10:FF:000001">
    <property type="entry name" value="zinc finger protein 263 isoform X1"/>
    <property type="match status" value="1"/>
</dbReference>
<dbReference type="Gene3D" id="3.30.160.60">
    <property type="entry name" value="Classic Zinc Finger"/>
    <property type="match status" value="9"/>
</dbReference>
<dbReference type="Gene3D" id="1.10.4020.10">
    <property type="entry name" value="DNA breaking-rejoining enzymes"/>
    <property type="match status" value="1"/>
</dbReference>
<dbReference type="InterPro" id="IPR003309">
    <property type="entry name" value="SCAN_dom"/>
</dbReference>
<dbReference type="InterPro" id="IPR038269">
    <property type="entry name" value="SCAN_sf"/>
</dbReference>
<dbReference type="InterPro" id="IPR036236">
    <property type="entry name" value="Znf_C2H2_sf"/>
</dbReference>
<dbReference type="InterPro" id="IPR013087">
    <property type="entry name" value="Znf_C2H2_type"/>
</dbReference>
<dbReference type="PANTHER" id="PTHR23226:SF416">
    <property type="entry name" value="FI01424P"/>
    <property type="match status" value="1"/>
</dbReference>
<dbReference type="PANTHER" id="PTHR23226">
    <property type="entry name" value="ZINC FINGER AND SCAN DOMAIN-CONTAINING"/>
    <property type="match status" value="1"/>
</dbReference>
<dbReference type="Pfam" id="PF02023">
    <property type="entry name" value="SCAN"/>
    <property type="match status" value="1"/>
</dbReference>
<dbReference type="Pfam" id="PF00096">
    <property type="entry name" value="zf-C2H2"/>
    <property type="match status" value="7"/>
</dbReference>
<dbReference type="SMART" id="SM00431">
    <property type="entry name" value="SCAN"/>
    <property type="match status" value="1"/>
</dbReference>
<dbReference type="SMART" id="SM00355">
    <property type="entry name" value="ZnF_C2H2"/>
    <property type="match status" value="12"/>
</dbReference>
<dbReference type="SUPFAM" id="SSF57667">
    <property type="entry name" value="beta-beta-alpha zinc fingers"/>
    <property type="match status" value="6"/>
</dbReference>
<dbReference type="SUPFAM" id="SSF47353">
    <property type="entry name" value="Retrovirus capsid dimerization domain-like"/>
    <property type="match status" value="1"/>
</dbReference>
<dbReference type="PROSITE" id="PS50804">
    <property type="entry name" value="SCAN_BOX"/>
    <property type="match status" value="1"/>
</dbReference>
<dbReference type="PROSITE" id="PS00028">
    <property type="entry name" value="ZINC_FINGER_C2H2_1"/>
    <property type="match status" value="11"/>
</dbReference>
<dbReference type="PROSITE" id="PS50157">
    <property type="entry name" value="ZINC_FINGER_C2H2_2"/>
    <property type="match status" value="12"/>
</dbReference>
<comment type="function">
    <text evidence="1">Induces apoptosis in cooperation with SIAH1A. Acts as a mediator between p53/TP53 and BAX in a neuronal death pathway that is activated by DNA damage. Acts synergistically with TRAF2 and inhibits TNF induced apoptosis through activation of NF-kappa-B (By similarity).</text>
</comment>
<comment type="subunit">
    <text evidence="1">Homodimer. Interacts with SIAH1A and SIAH2. Interacts with TRAF2 (By similarity).</text>
</comment>
<comment type="subcellular location">
    <subcellularLocation>
        <location>Nucleus</location>
    </subcellularLocation>
    <subcellularLocation>
        <location evidence="1">Cytoplasm</location>
    </subcellularLocation>
</comment>
<comment type="alternative products">
    <event type="alternative splicing"/>
    <isoform>
        <id>Q6H236-1</id>
        <name>1</name>
        <sequence type="displayed"/>
    </isoform>
    <isoform>
        <id>Q6H236-2</id>
        <name>2</name>
        <sequence type="not described"/>
    </isoform>
</comment>
<comment type="tissue specificity">
    <text evidence="5">Expressed at high levels in the cerebellum and at moderate levels in the testis and ovary.</text>
</comment>
<comment type="domain">
    <text evidence="1">The SCAN domain enables PEG3 homo- or heterodimerization to control gene expression in a combinatorial fashion.</text>
</comment>
<comment type="similarity">
    <text evidence="6">Belongs to the krueppel C2H2-type zinc-finger protein family.</text>
</comment>